<accession>Q21CL6</accession>
<evidence type="ECO:0000255" key="1">
    <source>
        <dbReference type="HAMAP-Rule" id="MF_00528"/>
    </source>
</evidence>
<feature type="chain" id="PRO_0000267402" description="Nucleoside triphosphate pyrophosphatase">
    <location>
        <begin position="1"/>
        <end position="202"/>
    </location>
</feature>
<feature type="active site" description="Proton acceptor" evidence="1">
    <location>
        <position position="79"/>
    </location>
</feature>
<dbReference type="EC" id="3.6.1.9" evidence="1"/>
<dbReference type="EMBL" id="CP000301">
    <property type="protein sequence ID" value="ABD85870.1"/>
    <property type="molecule type" value="Genomic_DNA"/>
</dbReference>
<dbReference type="SMR" id="Q21CL6"/>
<dbReference type="STRING" id="316056.RPC_0295"/>
<dbReference type="KEGG" id="rpc:RPC_0295"/>
<dbReference type="eggNOG" id="COG0424">
    <property type="taxonomic scope" value="Bacteria"/>
</dbReference>
<dbReference type="HOGENOM" id="CLU_040416_1_1_5"/>
<dbReference type="OrthoDB" id="9813962at2"/>
<dbReference type="GO" id="GO:0005737">
    <property type="term" value="C:cytoplasm"/>
    <property type="evidence" value="ECO:0007669"/>
    <property type="project" value="UniProtKB-SubCell"/>
</dbReference>
<dbReference type="GO" id="GO:0047429">
    <property type="term" value="F:nucleoside triphosphate diphosphatase activity"/>
    <property type="evidence" value="ECO:0007669"/>
    <property type="project" value="UniProtKB-EC"/>
</dbReference>
<dbReference type="GO" id="GO:0009117">
    <property type="term" value="P:nucleotide metabolic process"/>
    <property type="evidence" value="ECO:0007669"/>
    <property type="project" value="UniProtKB-KW"/>
</dbReference>
<dbReference type="CDD" id="cd00555">
    <property type="entry name" value="Maf"/>
    <property type="match status" value="1"/>
</dbReference>
<dbReference type="Gene3D" id="3.90.950.10">
    <property type="match status" value="1"/>
</dbReference>
<dbReference type="HAMAP" id="MF_00528">
    <property type="entry name" value="Maf"/>
    <property type="match status" value="1"/>
</dbReference>
<dbReference type="InterPro" id="IPR029001">
    <property type="entry name" value="ITPase-like_fam"/>
</dbReference>
<dbReference type="InterPro" id="IPR003697">
    <property type="entry name" value="Maf-like"/>
</dbReference>
<dbReference type="NCBIfam" id="TIGR00172">
    <property type="entry name" value="maf"/>
    <property type="match status" value="1"/>
</dbReference>
<dbReference type="PANTHER" id="PTHR43213">
    <property type="entry name" value="BIFUNCTIONAL DTTP/UTP PYROPHOSPHATASE/METHYLTRANSFERASE PROTEIN-RELATED"/>
    <property type="match status" value="1"/>
</dbReference>
<dbReference type="PANTHER" id="PTHR43213:SF5">
    <property type="entry name" value="BIFUNCTIONAL DTTP_UTP PYROPHOSPHATASE_METHYLTRANSFERASE PROTEIN-RELATED"/>
    <property type="match status" value="1"/>
</dbReference>
<dbReference type="Pfam" id="PF02545">
    <property type="entry name" value="Maf"/>
    <property type="match status" value="1"/>
</dbReference>
<dbReference type="PIRSF" id="PIRSF006305">
    <property type="entry name" value="Maf"/>
    <property type="match status" value="1"/>
</dbReference>
<dbReference type="SUPFAM" id="SSF52972">
    <property type="entry name" value="ITPase-like"/>
    <property type="match status" value="1"/>
</dbReference>
<protein>
    <recommendedName>
        <fullName evidence="1">Nucleoside triphosphate pyrophosphatase</fullName>
        <ecNumber evidence="1">3.6.1.9</ecNumber>
    </recommendedName>
    <alternativeName>
        <fullName evidence="1">Nucleotide pyrophosphatase</fullName>
        <shortName evidence="1">Nucleotide PPase</shortName>
    </alternativeName>
</protein>
<gene>
    <name type="ordered locus">RPC_0295</name>
</gene>
<organism>
    <name type="scientific">Rhodopseudomonas palustris (strain BisB18)</name>
    <dbReference type="NCBI Taxonomy" id="316056"/>
    <lineage>
        <taxon>Bacteria</taxon>
        <taxon>Pseudomonadati</taxon>
        <taxon>Pseudomonadota</taxon>
        <taxon>Alphaproteobacteria</taxon>
        <taxon>Hyphomicrobiales</taxon>
        <taxon>Nitrobacteraceae</taxon>
        <taxon>Rhodopseudomonas</taxon>
    </lineage>
</organism>
<name>NTPP_RHOPB</name>
<reference key="1">
    <citation type="submission" date="2006-03" db="EMBL/GenBank/DDBJ databases">
        <title>Complete sequence of Rhodopseudomonas palustris BisB18.</title>
        <authorList>
            <consortium name="US DOE Joint Genome Institute"/>
            <person name="Copeland A."/>
            <person name="Lucas S."/>
            <person name="Lapidus A."/>
            <person name="Barry K."/>
            <person name="Detter J.C."/>
            <person name="Glavina del Rio T."/>
            <person name="Hammon N."/>
            <person name="Israni S."/>
            <person name="Dalin E."/>
            <person name="Tice H."/>
            <person name="Pitluck S."/>
            <person name="Chain P."/>
            <person name="Malfatti S."/>
            <person name="Shin M."/>
            <person name="Vergez L."/>
            <person name="Schmutz J."/>
            <person name="Larimer F."/>
            <person name="Land M."/>
            <person name="Hauser L."/>
            <person name="Pelletier D.A."/>
            <person name="Kyrpides N."/>
            <person name="Anderson I."/>
            <person name="Oda Y."/>
            <person name="Harwood C.S."/>
            <person name="Richardson P."/>
        </authorList>
    </citation>
    <scope>NUCLEOTIDE SEQUENCE [LARGE SCALE GENOMIC DNA]</scope>
    <source>
        <strain>BisB18</strain>
    </source>
</reference>
<proteinExistence type="inferred from homology"/>
<sequence length="202" mass="21781">MTIWLGSQPLVLASQSYARQMLLQNAGIPFEAIPAAIDERGVQQASGLTSPAEIAARLAEEKALAVSQRLPGRLVLGADQTLALGERTFNKPADRAKATAQLRTLSGRRHELHSAIALVRNGKTVFAETSVARMTMRQLTEAEIEAYLNEAGDAATSSVGGYQVEGLGVHLFDGIHGDHFTILGLPLVPLLNYLRQQRLLAF</sequence>
<comment type="function">
    <text evidence="1">Nucleoside triphosphate pyrophosphatase. May have a dual role in cell division arrest and in preventing the incorporation of modified nucleotides into cellular nucleic acids.</text>
</comment>
<comment type="catalytic activity">
    <reaction evidence="1">
        <text>a ribonucleoside 5'-triphosphate + H2O = a ribonucleoside 5'-phosphate + diphosphate + H(+)</text>
        <dbReference type="Rhea" id="RHEA:23996"/>
        <dbReference type="ChEBI" id="CHEBI:15377"/>
        <dbReference type="ChEBI" id="CHEBI:15378"/>
        <dbReference type="ChEBI" id="CHEBI:33019"/>
        <dbReference type="ChEBI" id="CHEBI:58043"/>
        <dbReference type="ChEBI" id="CHEBI:61557"/>
        <dbReference type="EC" id="3.6.1.9"/>
    </reaction>
</comment>
<comment type="catalytic activity">
    <reaction evidence="1">
        <text>a 2'-deoxyribonucleoside 5'-triphosphate + H2O = a 2'-deoxyribonucleoside 5'-phosphate + diphosphate + H(+)</text>
        <dbReference type="Rhea" id="RHEA:44644"/>
        <dbReference type="ChEBI" id="CHEBI:15377"/>
        <dbReference type="ChEBI" id="CHEBI:15378"/>
        <dbReference type="ChEBI" id="CHEBI:33019"/>
        <dbReference type="ChEBI" id="CHEBI:61560"/>
        <dbReference type="ChEBI" id="CHEBI:65317"/>
        <dbReference type="EC" id="3.6.1.9"/>
    </reaction>
</comment>
<comment type="cofactor">
    <cofactor evidence="1">
        <name>a divalent metal cation</name>
        <dbReference type="ChEBI" id="CHEBI:60240"/>
    </cofactor>
</comment>
<comment type="subcellular location">
    <subcellularLocation>
        <location evidence="1">Cytoplasm</location>
    </subcellularLocation>
</comment>
<comment type="similarity">
    <text evidence="1">Belongs to the Maf family.</text>
</comment>
<keyword id="KW-0963">Cytoplasm</keyword>
<keyword id="KW-0378">Hydrolase</keyword>
<keyword id="KW-0546">Nucleotide metabolism</keyword>